<accession>B3PW09</accession>
<reference key="1">
    <citation type="journal article" date="2010" name="Appl. Environ. Microbiol.">
        <title>Conserved symbiotic plasmid DNA sequences in the multireplicon pangenomic structure of Rhizobium etli.</title>
        <authorList>
            <person name="Gonzalez V."/>
            <person name="Acosta J.L."/>
            <person name="Santamaria R.I."/>
            <person name="Bustos P."/>
            <person name="Fernandez J.L."/>
            <person name="Hernandez Gonzalez I.L."/>
            <person name="Diaz R."/>
            <person name="Flores M."/>
            <person name="Palacios R."/>
            <person name="Mora J."/>
            <person name="Davila G."/>
        </authorList>
    </citation>
    <scope>NUCLEOTIDE SEQUENCE [LARGE SCALE GENOMIC DNA]</scope>
    <source>
        <strain>CIAT 652</strain>
    </source>
</reference>
<evidence type="ECO:0000255" key="1">
    <source>
        <dbReference type="HAMAP-Rule" id="MF_01456"/>
    </source>
</evidence>
<comment type="function">
    <text evidence="1">NDH-1 shuttles electrons from NADH, via FMN and iron-sulfur (Fe-S) centers, to quinones in the respiratory chain. The immediate electron acceptor for the enzyme in this species is believed to be ubiquinone. Couples the redox reaction to proton translocation (for every two electrons transferred, four hydrogen ions are translocated across the cytoplasmic membrane), and thus conserves the redox energy in a proton gradient.</text>
</comment>
<comment type="catalytic activity">
    <reaction evidence="1">
        <text>a quinone + NADH + 5 H(+)(in) = a quinol + NAD(+) + 4 H(+)(out)</text>
        <dbReference type="Rhea" id="RHEA:57888"/>
        <dbReference type="ChEBI" id="CHEBI:15378"/>
        <dbReference type="ChEBI" id="CHEBI:24646"/>
        <dbReference type="ChEBI" id="CHEBI:57540"/>
        <dbReference type="ChEBI" id="CHEBI:57945"/>
        <dbReference type="ChEBI" id="CHEBI:132124"/>
    </reaction>
</comment>
<comment type="subunit">
    <text evidence="1">NDH-1 is composed of 14 different subunits. Subunits NuoA, H, J, K, L, M, N constitute the membrane sector of the complex.</text>
</comment>
<comment type="subcellular location">
    <subcellularLocation>
        <location evidence="1">Cell inner membrane</location>
        <topology evidence="1">Multi-pass membrane protein</topology>
    </subcellularLocation>
</comment>
<comment type="similarity">
    <text evidence="1">Belongs to the complex I subunit 4L family.</text>
</comment>
<proteinExistence type="inferred from homology"/>
<keyword id="KW-0997">Cell inner membrane</keyword>
<keyword id="KW-1003">Cell membrane</keyword>
<keyword id="KW-0472">Membrane</keyword>
<keyword id="KW-0520">NAD</keyword>
<keyword id="KW-0874">Quinone</keyword>
<keyword id="KW-1278">Translocase</keyword>
<keyword id="KW-0812">Transmembrane</keyword>
<keyword id="KW-1133">Transmembrane helix</keyword>
<keyword id="KW-0813">Transport</keyword>
<keyword id="KW-0830">Ubiquinone</keyword>
<gene>
    <name evidence="1" type="primary">nuoK1</name>
    <name type="ordered locus">RHECIAT_CH0001687</name>
</gene>
<organism>
    <name type="scientific">Rhizobium etli (strain CIAT 652)</name>
    <dbReference type="NCBI Taxonomy" id="491916"/>
    <lineage>
        <taxon>Bacteria</taxon>
        <taxon>Pseudomonadati</taxon>
        <taxon>Pseudomonadota</taxon>
        <taxon>Alphaproteobacteria</taxon>
        <taxon>Hyphomicrobiales</taxon>
        <taxon>Rhizobiaceae</taxon>
        <taxon>Rhizobium/Agrobacterium group</taxon>
        <taxon>Rhizobium</taxon>
    </lineage>
</organism>
<feature type="chain" id="PRO_0000390190" description="NADH-quinone oxidoreductase subunit K 1">
    <location>
        <begin position="1"/>
        <end position="102"/>
    </location>
</feature>
<feature type="transmembrane region" description="Helical" evidence="1">
    <location>
        <begin position="5"/>
        <end position="25"/>
    </location>
</feature>
<feature type="transmembrane region" description="Helical" evidence="1">
    <location>
        <begin position="31"/>
        <end position="51"/>
    </location>
</feature>
<feature type="transmembrane region" description="Helical" evidence="1">
    <location>
        <begin position="65"/>
        <end position="85"/>
    </location>
</feature>
<name>NUOK1_RHIE6</name>
<sequence>MVIGLSHYLTVSAILFTLGVFGIFLNRKNVIVILMSVELILLSVNINMVAFSHFLNDIVGQVFALFILTVAAAEAAIGLAILVVFYRNRGSIAVEDVNMMKG</sequence>
<protein>
    <recommendedName>
        <fullName evidence="1">NADH-quinone oxidoreductase subunit K 1</fullName>
        <ecNumber evidence="1">7.1.1.-</ecNumber>
    </recommendedName>
    <alternativeName>
        <fullName evidence="1">NADH dehydrogenase I subunit K 1</fullName>
    </alternativeName>
    <alternativeName>
        <fullName evidence="1">NDH-1 subunit K 1</fullName>
    </alternativeName>
</protein>
<dbReference type="EC" id="7.1.1.-" evidence="1"/>
<dbReference type="EMBL" id="CP001074">
    <property type="protein sequence ID" value="ACE90661.1"/>
    <property type="molecule type" value="Genomic_DNA"/>
</dbReference>
<dbReference type="SMR" id="B3PW09"/>
<dbReference type="KEGG" id="rec:RHECIAT_CH0001687"/>
<dbReference type="eggNOG" id="COG0713">
    <property type="taxonomic scope" value="Bacteria"/>
</dbReference>
<dbReference type="HOGENOM" id="CLU_144724_2_0_5"/>
<dbReference type="Proteomes" id="UP000008817">
    <property type="component" value="Chromosome"/>
</dbReference>
<dbReference type="GO" id="GO:0030964">
    <property type="term" value="C:NADH dehydrogenase complex"/>
    <property type="evidence" value="ECO:0007669"/>
    <property type="project" value="TreeGrafter"/>
</dbReference>
<dbReference type="GO" id="GO:0005886">
    <property type="term" value="C:plasma membrane"/>
    <property type="evidence" value="ECO:0007669"/>
    <property type="project" value="UniProtKB-SubCell"/>
</dbReference>
<dbReference type="GO" id="GO:0050136">
    <property type="term" value="F:NADH:ubiquinone reductase (non-electrogenic) activity"/>
    <property type="evidence" value="ECO:0007669"/>
    <property type="project" value="UniProtKB-UniRule"/>
</dbReference>
<dbReference type="GO" id="GO:0048038">
    <property type="term" value="F:quinone binding"/>
    <property type="evidence" value="ECO:0007669"/>
    <property type="project" value="UniProtKB-KW"/>
</dbReference>
<dbReference type="GO" id="GO:0042773">
    <property type="term" value="P:ATP synthesis coupled electron transport"/>
    <property type="evidence" value="ECO:0007669"/>
    <property type="project" value="InterPro"/>
</dbReference>
<dbReference type="FunFam" id="1.10.287.3510:FF:000001">
    <property type="entry name" value="NADH-quinone oxidoreductase subunit K"/>
    <property type="match status" value="1"/>
</dbReference>
<dbReference type="Gene3D" id="1.10.287.3510">
    <property type="match status" value="1"/>
</dbReference>
<dbReference type="HAMAP" id="MF_01456">
    <property type="entry name" value="NDH1_NuoK"/>
    <property type="match status" value="1"/>
</dbReference>
<dbReference type="InterPro" id="IPR001133">
    <property type="entry name" value="NADH_UbQ_OxRdtase_chain4L/K"/>
</dbReference>
<dbReference type="InterPro" id="IPR039428">
    <property type="entry name" value="NUOK/Mnh_C1-like"/>
</dbReference>
<dbReference type="NCBIfam" id="NF004320">
    <property type="entry name" value="PRK05715.1-2"/>
    <property type="match status" value="1"/>
</dbReference>
<dbReference type="NCBIfam" id="NF004321">
    <property type="entry name" value="PRK05715.1-3"/>
    <property type="match status" value="1"/>
</dbReference>
<dbReference type="NCBIfam" id="NF004323">
    <property type="entry name" value="PRK05715.1-5"/>
    <property type="match status" value="1"/>
</dbReference>
<dbReference type="PANTHER" id="PTHR11434:SF21">
    <property type="entry name" value="NADH DEHYDROGENASE SUBUNIT 4L-RELATED"/>
    <property type="match status" value="1"/>
</dbReference>
<dbReference type="PANTHER" id="PTHR11434">
    <property type="entry name" value="NADH-UBIQUINONE OXIDOREDUCTASE SUBUNIT ND4L"/>
    <property type="match status" value="1"/>
</dbReference>
<dbReference type="Pfam" id="PF00420">
    <property type="entry name" value="Oxidored_q2"/>
    <property type="match status" value="1"/>
</dbReference>